<accession>Q8N3R9</accession>
<accession>A1L380</accession>
<accession>Q7Z631</accession>
<accession>Q86T98</accession>
<accession>Q8N7I5</accession>
<accession>Q9H9Q0</accession>
<protein>
    <recommendedName>
        <fullName evidence="32">Protein PALS1</fullName>
    </recommendedName>
    <alternativeName>
        <fullName>MAGUK p55 subfamily member 5</fullName>
    </alternativeName>
    <alternativeName>
        <fullName evidence="28">Membrane protein, palmitoylated 5</fullName>
    </alternativeName>
    <alternativeName>
        <fullName evidence="26 33">Protein associated with Lin-7 1</fullName>
    </alternativeName>
</protein>
<proteinExistence type="evidence at protein level"/>
<reference key="1">
    <citation type="journal article" date="2007" name="BMC Genomics">
        <title>The full-ORF clone resource of the German cDNA consortium.</title>
        <authorList>
            <person name="Bechtel S."/>
            <person name="Rosenfelder H."/>
            <person name="Duda A."/>
            <person name="Schmidt C.P."/>
            <person name="Ernst U."/>
            <person name="Wellenreuther R."/>
            <person name="Mehrle A."/>
            <person name="Schuster C."/>
            <person name="Bahr A."/>
            <person name="Bloecker H."/>
            <person name="Heubner D."/>
            <person name="Hoerlein A."/>
            <person name="Michel G."/>
            <person name="Wedler H."/>
            <person name="Koehrer K."/>
            <person name="Ottenwaelder B."/>
            <person name="Poustka A."/>
            <person name="Wiemann S."/>
            <person name="Schupp I."/>
        </authorList>
    </citation>
    <scope>NUCLEOTIDE SEQUENCE [LARGE SCALE MRNA] (ISOFORMS 1 AND 2)</scope>
    <source>
        <tissue>Skeletal muscle</tissue>
        <tissue>Spinal cord</tissue>
    </source>
</reference>
<reference key="2">
    <citation type="submission" date="2005-07" db="EMBL/GenBank/DDBJ databases">
        <authorList>
            <person name="Mural R.J."/>
            <person name="Istrail S."/>
            <person name="Sutton G.G."/>
            <person name="Florea L."/>
            <person name="Halpern A.L."/>
            <person name="Mobarry C.M."/>
            <person name="Lippert R."/>
            <person name="Walenz B."/>
            <person name="Shatkay H."/>
            <person name="Dew I."/>
            <person name="Miller J.R."/>
            <person name="Flanigan M.J."/>
            <person name="Edwards N.J."/>
            <person name="Bolanos R."/>
            <person name="Fasulo D."/>
            <person name="Halldorsson B.V."/>
            <person name="Hannenhalli S."/>
            <person name="Turner R."/>
            <person name="Yooseph S."/>
            <person name="Lu F."/>
            <person name="Nusskern D.R."/>
            <person name="Shue B.C."/>
            <person name="Zheng X.H."/>
            <person name="Zhong F."/>
            <person name="Delcher A.L."/>
            <person name="Huson D.H."/>
            <person name="Kravitz S.A."/>
            <person name="Mouchard L."/>
            <person name="Reinert K."/>
            <person name="Remington K.A."/>
            <person name="Clark A.G."/>
            <person name="Waterman M.S."/>
            <person name="Eichler E.E."/>
            <person name="Adams M.D."/>
            <person name="Hunkapiller M.W."/>
            <person name="Myers E.W."/>
            <person name="Venter J.C."/>
        </authorList>
    </citation>
    <scope>NUCLEOTIDE SEQUENCE [LARGE SCALE GENOMIC DNA]</scope>
</reference>
<reference key="3">
    <citation type="journal article" date="2004" name="Genome Res.">
        <title>The status, quality, and expansion of the NIH full-length cDNA project: the Mammalian Gene Collection (MGC).</title>
        <authorList>
            <consortium name="The MGC Project Team"/>
        </authorList>
    </citation>
    <scope>NUCLEOTIDE SEQUENCE [LARGE SCALE MRNA] (ISOFORM 1)</scope>
    <source>
        <tissue>Eye</tissue>
    </source>
</reference>
<reference key="4">
    <citation type="journal article" date="2004" name="Nat. Genet.">
        <title>Complete sequencing and characterization of 21,243 full-length human cDNAs.</title>
        <authorList>
            <person name="Ota T."/>
            <person name="Suzuki Y."/>
            <person name="Nishikawa T."/>
            <person name="Otsuki T."/>
            <person name="Sugiyama T."/>
            <person name="Irie R."/>
            <person name="Wakamatsu A."/>
            <person name="Hayashi K."/>
            <person name="Sato H."/>
            <person name="Nagai K."/>
            <person name="Kimura K."/>
            <person name="Makita H."/>
            <person name="Sekine M."/>
            <person name="Obayashi M."/>
            <person name="Nishi T."/>
            <person name="Shibahara T."/>
            <person name="Tanaka T."/>
            <person name="Ishii S."/>
            <person name="Yamamoto J."/>
            <person name="Saito K."/>
            <person name="Kawai Y."/>
            <person name="Isono Y."/>
            <person name="Nakamura Y."/>
            <person name="Nagahari K."/>
            <person name="Murakami K."/>
            <person name="Yasuda T."/>
            <person name="Iwayanagi T."/>
            <person name="Wagatsuma M."/>
            <person name="Shiratori A."/>
            <person name="Sudo H."/>
            <person name="Hosoiri T."/>
            <person name="Kaku Y."/>
            <person name="Kodaira H."/>
            <person name="Kondo H."/>
            <person name="Sugawara M."/>
            <person name="Takahashi M."/>
            <person name="Kanda K."/>
            <person name="Yokoi T."/>
            <person name="Furuya T."/>
            <person name="Kikkawa E."/>
            <person name="Omura Y."/>
            <person name="Abe K."/>
            <person name="Kamihara K."/>
            <person name="Katsuta N."/>
            <person name="Sato K."/>
            <person name="Tanikawa M."/>
            <person name="Yamazaki M."/>
            <person name="Ninomiya K."/>
            <person name="Ishibashi T."/>
            <person name="Yamashita H."/>
            <person name="Murakawa K."/>
            <person name="Fujimori K."/>
            <person name="Tanai H."/>
            <person name="Kimata M."/>
            <person name="Watanabe M."/>
            <person name="Hiraoka S."/>
            <person name="Chiba Y."/>
            <person name="Ishida S."/>
            <person name="Ono Y."/>
            <person name="Takiguchi S."/>
            <person name="Watanabe S."/>
            <person name="Yosida M."/>
            <person name="Hotuta T."/>
            <person name="Kusano J."/>
            <person name="Kanehori K."/>
            <person name="Takahashi-Fujii A."/>
            <person name="Hara H."/>
            <person name="Tanase T.-O."/>
            <person name="Nomura Y."/>
            <person name="Togiya S."/>
            <person name="Komai F."/>
            <person name="Hara R."/>
            <person name="Takeuchi K."/>
            <person name="Arita M."/>
            <person name="Imose N."/>
            <person name="Musashino K."/>
            <person name="Yuuki H."/>
            <person name="Oshima A."/>
            <person name="Sasaki N."/>
            <person name="Aotsuka S."/>
            <person name="Yoshikawa Y."/>
            <person name="Matsunawa H."/>
            <person name="Ichihara T."/>
            <person name="Shiohata N."/>
            <person name="Sano S."/>
            <person name="Moriya S."/>
            <person name="Momiyama H."/>
            <person name="Satoh N."/>
            <person name="Takami S."/>
            <person name="Terashima Y."/>
            <person name="Suzuki O."/>
            <person name="Nakagawa S."/>
            <person name="Senoh A."/>
            <person name="Mizoguchi H."/>
            <person name="Goto Y."/>
            <person name="Shimizu F."/>
            <person name="Wakebe H."/>
            <person name="Hishigaki H."/>
            <person name="Watanabe T."/>
            <person name="Sugiyama A."/>
            <person name="Takemoto M."/>
            <person name="Kawakami B."/>
            <person name="Yamazaki M."/>
            <person name="Watanabe K."/>
            <person name="Kumagai A."/>
            <person name="Itakura S."/>
            <person name="Fukuzumi Y."/>
            <person name="Fujimori Y."/>
            <person name="Komiyama M."/>
            <person name="Tashiro H."/>
            <person name="Tanigami A."/>
            <person name="Fujiwara T."/>
            <person name="Ono T."/>
            <person name="Yamada K."/>
            <person name="Fujii Y."/>
            <person name="Ozaki K."/>
            <person name="Hirao M."/>
            <person name="Ohmori Y."/>
            <person name="Kawabata A."/>
            <person name="Hikiji T."/>
            <person name="Kobatake N."/>
            <person name="Inagaki H."/>
            <person name="Ikema Y."/>
            <person name="Okamoto S."/>
            <person name="Okitani R."/>
            <person name="Kawakami T."/>
            <person name="Noguchi S."/>
            <person name="Itoh T."/>
            <person name="Shigeta K."/>
            <person name="Senba T."/>
            <person name="Matsumura K."/>
            <person name="Nakajima Y."/>
            <person name="Mizuno T."/>
            <person name="Morinaga M."/>
            <person name="Sasaki M."/>
            <person name="Togashi T."/>
            <person name="Oyama M."/>
            <person name="Hata H."/>
            <person name="Watanabe M."/>
            <person name="Komatsu T."/>
            <person name="Mizushima-Sugano J."/>
            <person name="Satoh T."/>
            <person name="Shirai Y."/>
            <person name="Takahashi Y."/>
            <person name="Nakagawa K."/>
            <person name="Okumura K."/>
            <person name="Nagase T."/>
            <person name="Nomura N."/>
            <person name="Kikuchi H."/>
            <person name="Masuho Y."/>
            <person name="Yamashita R."/>
            <person name="Nakai K."/>
            <person name="Yada T."/>
            <person name="Nakamura Y."/>
            <person name="Ohara O."/>
            <person name="Isogai T."/>
            <person name="Sugano S."/>
        </authorList>
    </citation>
    <scope>NUCLEOTIDE SEQUENCE [LARGE SCALE MRNA] OF 1-441 (ISOFORM 1)</scope>
    <scope>NUCLEOTIDE SEQUENCE [LARGE SCALE MRNA] OF 155-675</scope>
    <source>
        <tissue>Brain</tissue>
    </source>
</reference>
<reference key="5">
    <citation type="journal article" date="2003" name="Gene">
        <title>Mammalian Crumbs3 is a small transmembrane protein linked to protein associated with Lin-7 (Pals1).</title>
        <authorList>
            <person name="Makarova O."/>
            <person name="Roh M.H."/>
            <person name="Liu C.-J."/>
            <person name="Laurinec S."/>
            <person name="Margolis B."/>
        </authorList>
    </citation>
    <scope>INTERACTION WITH CRB3 AND PATJ</scope>
</reference>
<reference key="6">
    <citation type="journal article" date="2005" name="Invest. Ophthalmol. Vis. Sci.">
        <title>MPP5 recruits MPP4 to the CRB1 complex in photoreceptors.</title>
        <authorList>
            <person name="Kantardzhieva A."/>
            <person name="Gosens I."/>
            <person name="Alexeeva S."/>
            <person name="Punte I.M."/>
            <person name="Versteeg I."/>
            <person name="Krieger E."/>
            <person name="Neefjes-Mol C.A."/>
            <person name="den Hollander A.I."/>
            <person name="Letteboer S.J.F."/>
            <person name="Klooster J."/>
            <person name="Cremers F.P.M."/>
            <person name="Roepman R."/>
            <person name="Wijnholds J."/>
        </authorList>
    </citation>
    <scope>COMPLEX FORMATION WITH CRB1 AND MPP4</scope>
    <scope>SUBCELLULAR LOCATION</scope>
    <scope>TISSUE SPECIFICITY</scope>
</reference>
<reference key="7">
    <citation type="journal article" date="2005" name="J. Comp. Neurol.">
        <title>Membrane-associated guanylate kinase proteins MPP4 and MPP5 associate with Veli3 at distinct intercellular junctions of the neurosensory retina.</title>
        <authorList>
            <person name="Stoehr H."/>
            <person name="Molday L.L."/>
            <person name="Molday R.S."/>
            <person name="Weber B.H.F."/>
            <person name="Biedermann B."/>
            <person name="Reichenbach A."/>
            <person name="Kraemer F."/>
        </authorList>
    </citation>
    <scope>TISSUE SPECIFICITY</scope>
</reference>
<reference key="8">
    <citation type="journal article" date="2007" name="Hum. Mol. Genet.">
        <title>MPP1 links the Usher protein network and the Crumbs protein complex in the retina.</title>
        <authorList>
            <person name="Gosens I."/>
            <person name="van Wijk E."/>
            <person name="Kersten F.F."/>
            <person name="Krieger E."/>
            <person name="van der Zwaag B."/>
            <person name="Maerker T."/>
            <person name="Letteboer S.J."/>
            <person name="Dusseljee S."/>
            <person name="Peters T."/>
            <person name="Spierenburg H.A."/>
            <person name="Punte I.M."/>
            <person name="Wolfrum U."/>
            <person name="Cremers F.P.M."/>
            <person name="Kremer H."/>
            <person name="Roepman R."/>
        </authorList>
    </citation>
    <scope>INTERACTION WITH MPP1</scope>
    <scope>SUBCELLULAR LOCATION</scope>
    <scope>TISSUE SPECIFICITY</scope>
</reference>
<reference key="9">
    <citation type="journal article" date="2006" name="Cell">
        <title>A Rich1/Amot complex regulates the Cdc42 GTPase and apical-polarity proteins in epithelial cells.</title>
        <authorList>
            <person name="Wells C.D."/>
            <person name="Fawcett J.P."/>
            <person name="Traweger A."/>
            <person name="Yamanaka Y."/>
            <person name="Goudreault M."/>
            <person name="Elder K."/>
            <person name="Kulkarni S."/>
            <person name="Gish G."/>
            <person name="Virag C."/>
            <person name="Lim C."/>
            <person name="Colwill K."/>
            <person name="Starostine A."/>
            <person name="Metalnikov P."/>
            <person name="Pawson T."/>
        </authorList>
    </citation>
    <scope>IDENTIFICATION BY MASS SPECTROMETRY</scope>
    <scope>FUNCTION</scope>
    <scope>IDENTIFICATION IN A COMPLEX WITH ARHGAP17; AMOT; PATJ AND PARD3</scope>
    <scope>INTERACTION WITH MPP7</scope>
</reference>
<reference key="10">
    <citation type="journal article" date="2006" name="FEBS J.">
        <title>MPP3 is recruited to the MPP5 protein scaffold at the retinal outer limiting membrane.</title>
        <authorList>
            <person name="Kantardzhieva A."/>
            <person name="Alexeeva S."/>
            <person name="Versteeg I."/>
            <person name="Wijnholds J."/>
        </authorList>
    </citation>
    <scope>IDENTIFICATION IN A COMPLEX WITH MPP3 AND CRB1</scope>
    <scope>SUBCELLULAR LOCATION</scope>
    <scope>TISSUE SPECIFICITY</scope>
</reference>
<reference key="11">
    <citation type="journal article" date="2007" name="Exp. Cell Res.">
        <title>FERM protein EPB41L5 is a novel member of the mammalian CRB-MPP5 polarity complex.</title>
        <authorList>
            <person name="Gosens I."/>
            <person name="Sessa A."/>
            <person name="den Hollander A.I."/>
            <person name="Letteboer S.J.F."/>
            <person name="Belloni V."/>
            <person name="Arends M.L."/>
            <person name="Le Bivic A."/>
            <person name="Cremers F.P.M."/>
            <person name="Broccoli V."/>
            <person name="Roepman R."/>
        </authorList>
    </citation>
    <scope>IDENTIFICATION IN A COMPLEX WITH CRB1 AND EPB41L5</scope>
    <scope>INTERACTION WITH CRB1 AND EPB41L5</scope>
</reference>
<reference key="12">
    <citation type="journal article" date="2007" name="Mol. Biol. Cell">
        <title>The MAGUK protein MPP7 binds to the polarity protein hDlg1 and facilitates epithelial tight junction formation.</title>
        <authorList>
            <person name="Stucke V.M."/>
            <person name="Timmerman E."/>
            <person name="Vandekerckhove J."/>
            <person name="Gevaert K."/>
            <person name="Hall A."/>
        </authorList>
    </citation>
    <scope>INTERACTION WITH MPP7</scope>
</reference>
<reference key="13">
    <citation type="journal article" date="2008" name="Proc. Natl. Acad. Sci. U.S.A.">
        <title>A quantitative atlas of mitotic phosphorylation.</title>
        <authorList>
            <person name="Dephoure N."/>
            <person name="Zhou C."/>
            <person name="Villen J."/>
            <person name="Beausoleil S.A."/>
            <person name="Bakalarski C.E."/>
            <person name="Elledge S.J."/>
            <person name="Gygi S.P."/>
        </authorList>
    </citation>
    <scope>IDENTIFICATION BY MASS SPECTROMETRY [LARGE SCALE ANALYSIS]</scope>
    <source>
        <tissue>Cervix carcinoma</tissue>
    </source>
</reference>
<reference key="14">
    <citation type="journal article" date="2009" name="Hum. Mol. Genet.">
        <title>Nephrocystin-1 and nephrocystin-4 are required for epithelial morphogenesis and associate with PALS1/PATJ and Par6.</title>
        <authorList>
            <person name="Delous M."/>
            <person name="Hellman N.E."/>
            <person name="Gaude H.M."/>
            <person name="Silbermann F."/>
            <person name="Le Bivic A."/>
            <person name="Salomon R."/>
            <person name="Antignac C."/>
            <person name="Saunier S."/>
        </authorList>
    </citation>
    <scope>INTERACTION WITH NPHP1 AND NPHP4</scope>
</reference>
<reference key="15">
    <citation type="journal article" date="2010" name="Dev. Cell">
        <title>The Crumbs complex couples cell density sensing to Hippo-dependent control of the TGF-beta-SMAD pathway.</title>
        <authorList>
            <person name="Varelas X."/>
            <person name="Samavarchi-Tehrani P."/>
            <person name="Narimatsu M."/>
            <person name="Weiss A."/>
            <person name="Cockburn K."/>
            <person name="Larsen B.G."/>
            <person name="Rossant J."/>
            <person name="Wrana J.L."/>
        </authorList>
    </citation>
    <scope>INTERACTION WITH WWTR1</scope>
</reference>
<reference key="16">
    <citation type="journal article" date="2010" name="Mol. Biol. Cell">
        <title>The SARS coronavirus E protein interacts with PALS1 and alters tight junction formation and epithelial morphogenesis.</title>
        <authorList>
            <person name="Teoh K.T."/>
            <person name="Siu Y.L."/>
            <person name="Chan W.L."/>
            <person name="Schlueter M.A."/>
            <person name="Liu C.J."/>
            <person name="Peiris J.S."/>
            <person name="Bruzzone R."/>
            <person name="Margolis B."/>
            <person name="Nal B."/>
        </authorList>
    </citation>
    <scope>FUNCTION (MICROBIAL INFECTION)</scope>
    <scope>INTERACTION WITH SARS-COV E</scope>
    <scope>SUBCELLULAR LOCATION</scope>
</reference>
<reference key="17">
    <citation type="journal article" date="2010" name="Sci. Signal.">
        <title>Quantitative phosphoproteomics reveals widespread full phosphorylation site occupancy during mitosis.</title>
        <authorList>
            <person name="Olsen J.V."/>
            <person name="Vermeulen M."/>
            <person name="Santamaria A."/>
            <person name="Kumar C."/>
            <person name="Miller M.L."/>
            <person name="Jensen L.J."/>
            <person name="Gnad F."/>
            <person name="Cox J."/>
            <person name="Jensen T.S."/>
            <person name="Nigg E.A."/>
            <person name="Brunak S."/>
            <person name="Mann M."/>
        </authorList>
    </citation>
    <scope>PHOSPHORYLATION [LARGE SCALE ANALYSIS] AT SER-25</scope>
    <scope>IDENTIFICATION BY MASS SPECTROMETRY [LARGE SCALE ANALYSIS]</scope>
    <source>
        <tissue>Cervix carcinoma</tissue>
    </source>
</reference>
<reference key="18">
    <citation type="journal article" date="2011" name="PLoS ONE">
        <title>Participation of the cell polarity protein PALS1 to T-cell receptor-mediated NF-kappaB activation.</title>
        <authorList>
            <person name="Carvalho G."/>
            <person name="Poalas K."/>
            <person name="Demian C."/>
            <person name="Hatchi E."/>
            <person name="Vazquez A."/>
            <person name="Bidere N."/>
        </authorList>
    </citation>
    <scope>FUNCTION</scope>
    <scope>SUBCELLULAR LOCATION</scope>
    <scope>TISSUE SPECIFICITY</scope>
</reference>
<reference key="19">
    <citation type="journal article" date="2013" name="J. Proteome Res.">
        <title>Toward a comprehensive characterization of a human cancer cell phosphoproteome.</title>
        <authorList>
            <person name="Zhou H."/>
            <person name="Di Palma S."/>
            <person name="Preisinger C."/>
            <person name="Peng M."/>
            <person name="Polat A.N."/>
            <person name="Heck A.J."/>
            <person name="Mohammed S."/>
        </authorList>
    </citation>
    <scope>PHOSPHORYLATION [LARGE SCALE ANALYSIS] AT SER-14; SER-25 AND SER-83</scope>
    <scope>IDENTIFICATION BY MASS SPECTROMETRY [LARGE SCALE ANALYSIS]</scope>
    <source>
        <tissue>Cervix carcinoma</tissue>
        <tissue>Erythroleukemia</tissue>
    </source>
</reference>
<reference key="20">
    <citation type="journal article" date="2014" name="J. Proteomics">
        <title>An enzyme assisted RP-RPLC approach for in-depth analysis of human liver phosphoproteome.</title>
        <authorList>
            <person name="Bian Y."/>
            <person name="Song C."/>
            <person name="Cheng K."/>
            <person name="Dong M."/>
            <person name="Wang F."/>
            <person name="Huang J."/>
            <person name="Sun D."/>
            <person name="Wang L."/>
            <person name="Ye M."/>
            <person name="Zou H."/>
        </authorList>
    </citation>
    <scope>PHOSPHORYLATION [LARGE SCALE ANALYSIS] AT SER-84</scope>
    <scope>IDENTIFICATION BY MASS SPECTROMETRY [LARGE SCALE ANALYSIS]</scope>
    <source>
        <tissue>Liver</tissue>
    </source>
</reference>
<reference key="21">
    <citation type="journal article" date="2016" name="Mol. Biol. Cell">
        <title>VE-cadherin interacts with cell polarity protein Pals1 to regulate vascular lumen formation.</title>
        <authorList>
            <person name="Brinkmann B.F."/>
            <person name="Steinbacher T."/>
            <person name="Hartmann C."/>
            <person name="Kummer D."/>
            <person name="Pajonczyk D."/>
            <person name="Mirzapourshafiyi F."/>
            <person name="Nakayama M."/>
            <person name="Weide T."/>
            <person name="Gerke V."/>
            <person name="Ebnet K."/>
        </authorList>
    </citation>
    <scope>FUNCTION</scope>
    <scope>INTERACTION WITH CADH5</scope>
    <scope>TISSUE SPECIFICITY</scope>
</reference>
<reference key="22">
    <citation type="journal article" date="2020" name="Microbes Infect.">
        <title>Improved binding of SARS-CoV-2 Envelope protein to tight junction-associated PALS1 could play a key role in COVID-19 pathogenesis.</title>
        <authorList>
            <person name="De Maio F."/>
            <person name="Lo Cascio E."/>
            <person name="Babini G."/>
            <person name="Sali M."/>
            <person name="Della Longa S."/>
            <person name="Tilocca B."/>
            <person name="Roncada P."/>
            <person name="Arcovito A."/>
            <person name="Sanguinetti M."/>
            <person name="Scambia G."/>
            <person name="Urbani A."/>
        </authorList>
    </citation>
    <scope>INTERACTION WITH SARS-COV-2 E PROTEIN (MICROBIAL INFECTION)</scope>
    <scope>FUNCTION (MICROBIAL INFECTION)</scope>
</reference>
<reference key="23">
    <citation type="journal article" date="2021" name="Life. Sci Alliance">
        <title>AMOTL2 mono-ubiquitination by WWP1 promotes contact inhibition by facilitating LATS activation.</title>
        <authorList>
            <person name="Hwang D."/>
            <person name="Kim M."/>
            <person name="Kim S."/>
            <person name="Kwon M.R."/>
            <person name="Kang Y.S."/>
            <person name="Kim D."/>
            <person name="Kang H.C."/>
            <person name="Lim D.S."/>
        </authorList>
    </citation>
    <scope>INTERACTION WITH WWP1</scope>
    <scope>SUBCELLULAR LOCATION</scope>
</reference>
<reference key="24">
    <citation type="journal article" date="2005" name="Proc. Natl. Acad. Sci. U.S.A.">
        <title>A unified assembly mode revealed by the structures of tetrameric L27 domain complexes formed by mLin-2/mLin-7 and Patj/Pals1 scaffold proteins.</title>
        <authorList>
            <person name="Feng W."/>
            <person name="Long J.-F."/>
            <person name="Zhang M."/>
        </authorList>
    </citation>
    <scope>STRUCTURE BY NMR OF 118-177</scope>
    <scope>INTERACTION WITH MPDZ</scope>
</reference>
<reference key="25">
    <citation type="journal article" date="2012" name="J. Biol. Chem.">
        <title>Structure of an L27 domain heterotrimer from cell polarity complex Patj/Pals1/Mals2 reveals mutually independent L27 domain assembly mode.</title>
        <authorList>
            <person name="Zhang J."/>
            <person name="Yang X."/>
            <person name="Wang Z."/>
            <person name="Zhou H."/>
            <person name="Xie X."/>
            <person name="Shen Y."/>
            <person name="Long J."/>
        </authorList>
    </citation>
    <scope>X-RAY CRYSTALLOGRAPHY (2.05 ANGSTROMS) OF 119-232 IN COMPLEX WITH MOUSE LIN7B AND RAT PATJ</scope>
</reference>
<reference key="26">
    <citation type="journal article" date="2014" name="Proc. Natl. Acad. Sci. U.S.A.">
        <title>Structure of Crumbs tail in complex with the PALS1 PDZ-SH3-GK tandem reveals a highly specific assembly mechanism for the apical Crumbs complex.</title>
        <authorList>
            <person name="Li Y."/>
            <person name="Wei Z."/>
            <person name="Yan Y."/>
            <person name="Wan Q."/>
            <person name="Du Q."/>
            <person name="Zhang M."/>
        </authorList>
    </citation>
    <scope>X-RAY CRYSTALLOGRAPHY (2.95 ANGSTROMS) OF 236-675 IN COMPLEX WITH DROSOPHILA CRB</scope>
    <scope>FUNCTION</scope>
    <scope>SUBCELLULAR LOCATION</scope>
    <scope>MUTAGENESIS OF ASP-386</scope>
</reference>
<reference key="27">
    <citation type="journal article" date="2015" name="Acta Crystallogr. D">
        <title>Structures of the human Pals1 PDZ domain with and without ligand suggest gated access of Crb to the PDZ peptide-binding groove.</title>
        <authorList>
            <person name="Ivanova M.E."/>
            <person name="Fletcher G.C."/>
            <person name="O'Reilly N."/>
            <person name="Purkiss A.G."/>
            <person name="Thompson B.J."/>
            <person name="McDonald N.Q."/>
        </authorList>
    </citation>
    <scope>X-RAY CRYSTALLOGRAPHY (1.23 ANGSTROMS) OF 251-335 IN COMPLEX WITH CRB1</scope>
    <scope>MUTAGENESIS OF PHE-318</scope>
</reference>
<name>PALS1_HUMAN</name>
<sequence length="675" mass="77294">MTTSHMNGHVTEESDSEVKNVDLASPEEHQKHREMAVDCPGDLGTRMMPIRRSAQLERIRQQQEDMRRRREEEGKKQELDLNSSMRLKKLAQIPPKTGIDNPMFDTEEGIVLESPHYAVKILEIEDLFSSLKHIQHTLVDSQSQEDISLLLQLVQNKDFQNAFKIHNAITVHMNKASPPFPLISNAQDLAQEVQTVLKPVHHKEGQELTALLNTPHIQALLLAHDKVAEQEMQLEPITDERVYESIGQYGGETVKIVRIEKARDIPLGATVRNEMDSVIISRIVKGGAAEKSGLLHEGDEVLEINGIEIRGKDVNEVFDLLSDMHGTLTFVLIPSQQIKPPPAKETVIHVKAHFDYDPSDDPYVPCRELGLSFQKGDILHVISQEDPNWWQAYREGDEDNQPLAGLVPGKSFQQQREAMKQTIEEDKEPEKSGKLWCAKKNKKKRKKVLYNANKNDDYDNEEILTYEEMSLYHQPANRKRPIILIGPQNCGQNELRQRLMNKEKDRFASAVPHTTRSRRDQEVAGRDYHFVSRQAFEADIAAGKFIEHGEFEKNLYGTSIDSVRQVINSGKICLLSLRTQSLKTLRNSDLKPYIIFIAPPSQERLRALLAKEGKNPKPEELREIIEKTREMEQNNGHYFDTAIVNSDLDKAYQELLRLINKLDTEPQWVPSTWLR</sequence>
<dbReference type="EMBL" id="AL832326">
    <property type="protein sequence ID" value="CAD38620.1"/>
    <property type="molecule type" value="mRNA"/>
</dbReference>
<dbReference type="EMBL" id="AL832578">
    <property type="protein sequence ID" value="CAD89937.1"/>
    <property type="molecule type" value="mRNA"/>
</dbReference>
<dbReference type="EMBL" id="CH471061">
    <property type="protein sequence ID" value="EAW80930.1"/>
    <property type="molecule type" value="Genomic_DNA"/>
</dbReference>
<dbReference type="EMBL" id="BC053366">
    <property type="protein sequence ID" value="AAH53366.1"/>
    <property type="status" value="ALT_SEQ"/>
    <property type="molecule type" value="mRNA"/>
</dbReference>
<dbReference type="EMBL" id="BC129933">
    <property type="protein sequence ID" value="AAI29934.1"/>
    <property type="molecule type" value="mRNA"/>
</dbReference>
<dbReference type="EMBL" id="AK022677">
    <property type="protein sequence ID" value="BAB14172.1"/>
    <property type="status" value="ALT_INIT"/>
    <property type="molecule type" value="mRNA"/>
</dbReference>
<dbReference type="EMBL" id="AK098373">
    <property type="protein sequence ID" value="BAC05295.1"/>
    <property type="molecule type" value="mRNA"/>
</dbReference>
<dbReference type="CCDS" id="CCDS58325.1">
    <molecule id="Q8N3R9-2"/>
</dbReference>
<dbReference type="CCDS" id="CCDS9779.1">
    <molecule id="Q8N3R9-1"/>
</dbReference>
<dbReference type="RefSeq" id="NP_001243479.1">
    <molecule id="Q8N3R9-2"/>
    <property type="nucleotide sequence ID" value="NM_001256550.2"/>
</dbReference>
<dbReference type="RefSeq" id="NP_071919.2">
    <molecule id="Q8N3R9-1"/>
    <property type="nucleotide sequence ID" value="NM_022474.3"/>
</dbReference>
<dbReference type="RefSeq" id="XP_005268060.1">
    <molecule id="Q8N3R9-2"/>
    <property type="nucleotide sequence ID" value="XM_005268003.2"/>
</dbReference>
<dbReference type="RefSeq" id="XP_011535388.1">
    <molecule id="Q8N3R9-1"/>
    <property type="nucleotide sequence ID" value="XM_011537086.3"/>
</dbReference>
<dbReference type="RefSeq" id="XP_011535389.1">
    <molecule id="Q8N3R9-1"/>
    <property type="nucleotide sequence ID" value="XM_011537087.3"/>
</dbReference>
<dbReference type="RefSeq" id="XP_024305459.1">
    <molecule id="Q8N3R9-2"/>
    <property type="nucleotide sequence ID" value="XM_024449691.2"/>
</dbReference>
<dbReference type="RefSeq" id="XP_024305460.1">
    <molecule id="Q8N3R9-2"/>
    <property type="nucleotide sequence ID" value="XM_024449692.2"/>
</dbReference>
<dbReference type="RefSeq" id="XP_047287646.1">
    <molecule id="Q8N3R9-1"/>
    <property type="nucleotide sequence ID" value="XM_047431690.1"/>
</dbReference>
<dbReference type="RefSeq" id="XP_047287647.1">
    <molecule id="Q8N3R9-1"/>
    <property type="nucleotide sequence ID" value="XM_047431691.1"/>
</dbReference>
<dbReference type="RefSeq" id="XP_047287648.1">
    <molecule id="Q8N3R9-1"/>
    <property type="nucleotide sequence ID" value="XM_047431692.1"/>
</dbReference>
<dbReference type="RefSeq" id="XP_047287649.1">
    <molecule id="Q8N3R9-1"/>
    <property type="nucleotide sequence ID" value="XM_047431693.1"/>
</dbReference>
<dbReference type="RefSeq" id="XP_047287651.1">
    <molecule id="Q8N3R9-2"/>
    <property type="nucleotide sequence ID" value="XM_047431695.1"/>
</dbReference>
<dbReference type="PDB" id="1Y76">
    <property type="method" value="NMR"/>
    <property type="chains" value="B/D=118-177"/>
</dbReference>
<dbReference type="PDB" id="3UIT">
    <property type="method" value="X-ray"/>
    <property type="resolution" value="2.05 A"/>
    <property type="chains" value="A/B/C/D=119-232"/>
</dbReference>
<dbReference type="PDB" id="4UU5">
    <property type="method" value="X-ray"/>
    <property type="resolution" value="1.23 A"/>
    <property type="chains" value="A=251-335"/>
</dbReference>
<dbReference type="PDB" id="4UU6">
    <property type="method" value="X-ray"/>
    <property type="resolution" value="1.80 A"/>
    <property type="chains" value="A=251-335"/>
</dbReference>
<dbReference type="PDB" id="4WSI">
    <property type="method" value="X-ray"/>
    <property type="resolution" value="2.95 A"/>
    <property type="chains" value="A/B=236-675"/>
</dbReference>
<dbReference type="PDB" id="7M4R">
    <property type="method" value="EM"/>
    <property type="resolution" value="3.65 A"/>
    <property type="chains" value="A/B=236-675"/>
</dbReference>
<dbReference type="PDB" id="7NTJ">
    <property type="method" value="X-ray"/>
    <property type="resolution" value="1.74 A"/>
    <property type="chains" value="A/B=255-336"/>
</dbReference>
<dbReference type="PDB" id="7NTK">
    <property type="method" value="X-ray"/>
    <property type="resolution" value="1.90 A"/>
    <property type="chains" value="A/B/D/F=255-336"/>
</dbReference>
<dbReference type="PDB" id="7QCS">
    <property type="method" value="X-ray"/>
    <property type="resolution" value="2.80 A"/>
    <property type="chains" value="A/B/E=238-336"/>
</dbReference>
<dbReference type="PDBsum" id="1Y76"/>
<dbReference type="PDBsum" id="3UIT"/>
<dbReference type="PDBsum" id="4UU5"/>
<dbReference type="PDBsum" id="4UU6"/>
<dbReference type="PDBsum" id="4WSI"/>
<dbReference type="PDBsum" id="7M4R"/>
<dbReference type="PDBsum" id="7NTJ"/>
<dbReference type="PDBsum" id="7NTK"/>
<dbReference type="PDBsum" id="7QCS"/>
<dbReference type="BMRB" id="Q8N3R9"/>
<dbReference type="EMDB" id="EMD-23665"/>
<dbReference type="SMR" id="Q8N3R9"/>
<dbReference type="BioGRID" id="122155">
    <property type="interactions" value="95"/>
</dbReference>
<dbReference type="ComplexPortal" id="CPX-6166">
    <property type="entry name" value="CRUMBS3-PALS1-PATJ cell polarity complex"/>
</dbReference>
<dbReference type="ComplexPortal" id="CPX-6167">
    <property type="entry name" value="CRUMBS1-PALS1-PATJ cell polarity complex"/>
</dbReference>
<dbReference type="ComplexPortal" id="CPX-6180">
    <property type="entry name" value="CRUMBS2-PALS1-PATJ cell polarity complex"/>
</dbReference>
<dbReference type="CORUM" id="Q8N3R9"/>
<dbReference type="FunCoup" id="Q8N3R9">
    <property type="interactions" value="935"/>
</dbReference>
<dbReference type="IntAct" id="Q8N3R9">
    <property type="interactions" value="89"/>
</dbReference>
<dbReference type="MINT" id="Q8N3R9"/>
<dbReference type="STRING" id="9606.ENSP00000261681"/>
<dbReference type="GlyGen" id="Q8N3R9">
    <property type="glycosylation" value="2 sites, 1 N-linked glycan (1 site), 1 O-linked glycan (1 site)"/>
</dbReference>
<dbReference type="iPTMnet" id="Q8N3R9"/>
<dbReference type="PhosphoSitePlus" id="Q8N3R9"/>
<dbReference type="SwissPalm" id="Q8N3R9"/>
<dbReference type="BioMuta" id="MPP5"/>
<dbReference type="DMDM" id="116242632"/>
<dbReference type="jPOST" id="Q8N3R9"/>
<dbReference type="MassIVE" id="Q8N3R9"/>
<dbReference type="PaxDb" id="9606-ENSP00000261681"/>
<dbReference type="PeptideAtlas" id="Q8N3R9"/>
<dbReference type="ProteomicsDB" id="71827">
    <molecule id="Q8N3R9-1"/>
</dbReference>
<dbReference type="ProteomicsDB" id="71828">
    <molecule id="Q8N3R9-2"/>
</dbReference>
<dbReference type="Pumba" id="Q8N3R9"/>
<dbReference type="Antibodypedia" id="20">
    <property type="antibodies" value="352 antibodies from 37 providers"/>
</dbReference>
<dbReference type="DNASU" id="64398"/>
<dbReference type="Ensembl" id="ENST00000261681.9">
    <molecule id="Q8N3R9-1"/>
    <property type="protein sequence ID" value="ENSP00000261681.4"/>
    <property type="gene ID" value="ENSG00000072415.10"/>
</dbReference>
<dbReference type="Ensembl" id="ENST00000555925.5">
    <molecule id="Q8N3R9-2"/>
    <property type="protein sequence ID" value="ENSP00000451488.1"/>
    <property type="gene ID" value="ENSG00000072415.10"/>
</dbReference>
<dbReference type="Ensembl" id="ENST00000676464.1">
    <molecule id="Q8N3R9-1"/>
    <property type="protein sequence ID" value="ENSP00000503713.1"/>
    <property type="gene ID" value="ENSG00000072415.10"/>
</dbReference>
<dbReference type="Ensembl" id="ENST00000677382.1">
    <molecule id="Q8N3R9-1"/>
    <property type="protein sequence ID" value="ENSP00000503322.1"/>
    <property type="gene ID" value="ENSG00000072415.10"/>
</dbReference>
<dbReference type="Ensembl" id="ENST00000677835.1">
    <molecule id="Q8N3R9-1"/>
    <property type="protein sequence ID" value="ENSP00000503517.1"/>
    <property type="gene ID" value="ENSG00000072415.10"/>
</dbReference>
<dbReference type="Ensembl" id="ENST00000678380.1">
    <molecule id="Q8N3R9-1"/>
    <property type="protein sequence ID" value="ENSP00000503321.1"/>
    <property type="gene ID" value="ENSG00000072415.10"/>
</dbReference>
<dbReference type="GeneID" id="64398"/>
<dbReference type="KEGG" id="hsa:64398"/>
<dbReference type="MANE-Select" id="ENST00000261681.9">
    <property type="protein sequence ID" value="ENSP00000261681.4"/>
    <property type="RefSeq nucleotide sequence ID" value="NM_022474.4"/>
    <property type="RefSeq protein sequence ID" value="NP_071919.2"/>
</dbReference>
<dbReference type="UCSC" id="uc001xjc.5">
    <molecule id="Q8N3R9-1"/>
    <property type="organism name" value="human"/>
</dbReference>
<dbReference type="AGR" id="HGNC:18669"/>
<dbReference type="CTD" id="64398"/>
<dbReference type="DisGeNET" id="64398"/>
<dbReference type="GeneCards" id="PALS1"/>
<dbReference type="HGNC" id="HGNC:18669">
    <property type="gene designation" value="PALS1"/>
</dbReference>
<dbReference type="HPA" id="ENSG00000072415">
    <property type="expression patterns" value="Low tissue specificity"/>
</dbReference>
<dbReference type="MalaCards" id="PALS1"/>
<dbReference type="MIM" id="606958">
    <property type="type" value="gene"/>
</dbReference>
<dbReference type="neXtProt" id="NX_Q8N3R9"/>
<dbReference type="OpenTargets" id="ENSG00000072415"/>
<dbReference type="Orphanet" id="528084">
    <property type="disease" value="Non-specific syndromic intellectual disability"/>
</dbReference>
<dbReference type="VEuPathDB" id="HostDB:ENSG00000072415"/>
<dbReference type="eggNOG" id="KOG0609">
    <property type="taxonomic scope" value="Eukaryota"/>
</dbReference>
<dbReference type="GeneTree" id="ENSGT00940000156087"/>
<dbReference type="HOGENOM" id="CLU_001715_5_4_1"/>
<dbReference type="InParanoid" id="Q8N3R9"/>
<dbReference type="OMA" id="FSHRTMT"/>
<dbReference type="OrthoDB" id="43580at2759"/>
<dbReference type="PAN-GO" id="Q8N3R9">
    <property type="GO annotations" value="7 GO annotations based on evolutionary models"/>
</dbReference>
<dbReference type="PhylomeDB" id="Q8N3R9"/>
<dbReference type="TreeFam" id="TF314263"/>
<dbReference type="PathwayCommons" id="Q8N3R9"/>
<dbReference type="Reactome" id="R-HSA-420029">
    <property type="pathway name" value="Tight junction interactions"/>
</dbReference>
<dbReference type="Reactome" id="R-HSA-9692912">
    <property type="pathway name" value="SARS-CoV-1 targets PDZ proteins in cell-cell junction"/>
</dbReference>
<dbReference type="Reactome" id="R-HSA-9705677">
    <property type="pathway name" value="SARS-CoV-2 targets PDZ proteins in cell-cell junction"/>
</dbReference>
<dbReference type="SignaLink" id="Q8N3R9"/>
<dbReference type="SIGNOR" id="Q8N3R9"/>
<dbReference type="BioGRID-ORCS" id="64398">
    <property type="hits" value="21 hits in 1160 CRISPR screens"/>
</dbReference>
<dbReference type="ChiTaRS" id="MPP5">
    <property type="organism name" value="human"/>
</dbReference>
<dbReference type="EvolutionaryTrace" id="Q8N3R9"/>
<dbReference type="GeneWiki" id="MPP5"/>
<dbReference type="GenomeRNAi" id="64398"/>
<dbReference type="Pharos" id="Q8N3R9">
    <property type="development level" value="Tbio"/>
</dbReference>
<dbReference type="PRO" id="PR:Q8N3R9"/>
<dbReference type="Proteomes" id="UP000005640">
    <property type="component" value="Chromosome 14"/>
</dbReference>
<dbReference type="RNAct" id="Q8N3R9">
    <property type="molecule type" value="protein"/>
</dbReference>
<dbReference type="Bgee" id="ENSG00000072415">
    <property type="expression patterns" value="Expressed in jejunal mucosa and 189 other cell types or tissues"/>
</dbReference>
<dbReference type="ExpressionAtlas" id="Q8N3R9">
    <property type="expression patterns" value="baseline and differential"/>
</dbReference>
<dbReference type="GO" id="GO:0005912">
    <property type="term" value="C:adherens junction"/>
    <property type="evidence" value="ECO:0000314"/>
    <property type="project" value="UniProtKB"/>
</dbReference>
<dbReference type="GO" id="GO:0043296">
    <property type="term" value="C:apical junction complex"/>
    <property type="evidence" value="ECO:0000303"/>
    <property type="project" value="ComplexPortal"/>
</dbReference>
<dbReference type="GO" id="GO:0016324">
    <property type="term" value="C:apical plasma membrane"/>
    <property type="evidence" value="ECO:0000303"/>
    <property type="project" value="ComplexPortal"/>
</dbReference>
<dbReference type="GO" id="GO:0030424">
    <property type="term" value="C:axon"/>
    <property type="evidence" value="ECO:0007669"/>
    <property type="project" value="UniProtKB-SubCell"/>
</dbReference>
<dbReference type="GO" id="GO:0005923">
    <property type="term" value="C:bicellular tight junction"/>
    <property type="evidence" value="ECO:0007669"/>
    <property type="project" value="UniProtKB-SubCell"/>
</dbReference>
<dbReference type="GO" id="GO:0005737">
    <property type="term" value="C:cytoplasm"/>
    <property type="evidence" value="ECO:0000314"/>
    <property type="project" value="LIFEdb"/>
</dbReference>
<dbReference type="GO" id="GO:0033116">
    <property type="term" value="C:endoplasmic reticulum-Golgi intermediate compartment membrane"/>
    <property type="evidence" value="ECO:0000304"/>
    <property type="project" value="Reactome"/>
</dbReference>
<dbReference type="GO" id="GO:0070062">
    <property type="term" value="C:extracellular exosome"/>
    <property type="evidence" value="ECO:0007005"/>
    <property type="project" value="UniProtKB"/>
</dbReference>
<dbReference type="GO" id="GO:0005794">
    <property type="term" value="C:Golgi apparatus"/>
    <property type="evidence" value="ECO:0007669"/>
    <property type="project" value="UniProtKB-SubCell"/>
</dbReference>
<dbReference type="GO" id="GO:0043219">
    <property type="term" value="C:lateral loop"/>
    <property type="evidence" value="ECO:0007669"/>
    <property type="project" value="Ensembl"/>
</dbReference>
<dbReference type="GO" id="GO:0035749">
    <property type="term" value="C:myelin sheath adaxonal region"/>
    <property type="evidence" value="ECO:0007669"/>
    <property type="project" value="Ensembl"/>
</dbReference>
<dbReference type="GO" id="GO:0043204">
    <property type="term" value="C:perikaryon"/>
    <property type="evidence" value="ECO:0007669"/>
    <property type="project" value="UniProtKB-SubCell"/>
</dbReference>
<dbReference type="GO" id="GO:0005886">
    <property type="term" value="C:plasma membrane"/>
    <property type="evidence" value="ECO:0000318"/>
    <property type="project" value="GO_Central"/>
</dbReference>
<dbReference type="GO" id="GO:0032991">
    <property type="term" value="C:protein-containing complex"/>
    <property type="evidence" value="ECO:0000314"/>
    <property type="project" value="UniProtKB"/>
</dbReference>
<dbReference type="GO" id="GO:0043220">
    <property type="term" value="C:Schmidt-Lanterman incisure"/>
    <property type="evidence" value="ECO:0007669"/>
    <property type="project" value="Ensembl"/>
</dbReference>
<dbReference type="GO" id="GO:0005524">
    <property type="term" value="F:ATP binding"/>
    <property type="evidence" value="ECO:0007669"/>
    <property type="project" value="UniProtKB-KW"/>
</dbReference>
<dbReference type="GO" id="GO:0042802">
    <property type="term" value="F:identical protein binding"/>
    <property type="evidence" value="ECO:0000353"/>
    <property type="project" value="IntAct"/>
</dbReference>
<dbReference type="GO" id="GO:0019904">
    <property type="term" value="F:protein domain specific binding"/>
    <property type="evidence" value="ECO:0000353"/>
    <property type="project" value="BHF-UCL"/>
</dbReference>
<dbReference type="GO" id="GO:0021954">
    <property type="term" value="P:central nervous system neuron development"/>
    <property type="evidence" value="ECO:0000250"/>
    <property type="project" value="UniProtKB"/>
</dbReference>
<dbReference type="GO" id="GO:0021987">
    <property type="term" value="P:cerebral cortex development"/>
    <property type="evidence" value="ECO:0000250"/>
    <property type="project" value="UniProtKB"/>
</dbReference>
<dbReference type="GO" id="GO:0045197">
    <property type="term" value="P:establishment or maintenance of epithelial cell apical/basal polarity"/>
    <property type="evidence" value="ECO:0000318"/>
    <property type="project" value="GO_Central"/>
</dbReference>
<dbReference type="GO" id="GO:0016332">
    <property type="term" value="P:establishment or maintenance of polarity of embryonic epithelium"/>
    <property type="evidence" value="ECO:0000318"/>
    <property type="project" value="GO_Central"/>
</dbReference>
<dbReference type="GO" id="GO:0010467">
    <property type="term" value="P:gene expression"/>
    <property type="evidence" value="ECO:0007669"/>
    <property type="project" value="Ensembl"/>
</dbReference>
<dbReference type="GO" id="GO:0048699">
    <property type="term" value="P:generation of neurons"/>
    <property type="evidence" value="ECO:0000318"/>
    <property type="project" value="GO_Central"/>
</dbReference>
<dbReference type="GO" id="GO:0002011">
    <property type="term" value="P:morphogenesis of an epithelial sheet"/>
    <property type="evidence" value="ECO:0000315"/>
    <property type="project" value="UniProtKB"/>
</dbReference>
<dbReference type="GO" id="GO:0032288">
    <property type="term" value="P:myelin assembly"/>
    <property type="evidence" value="ECO:0007669"/>
    <property type="project" value="Ensembl"/>
</dbReference>
<dbReference type="GO" id="GO:0032287">
    <property type="term" value="P:peripheral nervous system myelin maintenance"/>
    <property type="evidence" value="ECO:0007669"/>
    <property type="project" value="Ensembl"/>
</dbReference>
<dbReference type="GO" id="GO:0035750">
    <property type="term" value="P:protein localization to myelin sheath abaxonal region"/>
    <property type="evidence" value="ECO:0007669"/>
    <property type="project" value="Ensembl"/>
</dbReference>
<dbReference type="GO" id="GO:0072659">
    <property type="term" value="P:protein localization to plasma membrane"/>
    <property type="evidence" value="ECO:0000318"/>
    <property type="project" value="GO_Central"/>
</dbReference>
<dbReference type="GO" id="GO:0017015">
    <property type="term" value="P:regulation of transforming growth factor beta receptor signaling pathway"/>
    <property type="evidence" value="ECO:0000250"/>
    <property type="project" value="UniProtKB"/>
</dbReference>
<dbReference type="CDD" id="cd00071">
    <property type="entry name" value="GMPK"/>
    <property type="match status" value="1"/>
</dbReference>
<dbReference type="CDD" id="cd06798">
    <property type="entry name" value="PDZ_MPP5-like"/>
    <property type="match status" value="1"/>
</dbReference>
<dbReference type="CDD" id="cd12036">
    <property type="entry name" value="SH3_MPP5"/>
    <property type="match status" value="1"/>
</dbReference>
<dbReference type="FunFam" id="2.30.30.40:FF:000105">
    <property type="entry name" value="MAGUK p55 subfamily member 5"/>
    <property type="match status" value="1"/>
</dbReference>
<dbReference type="FunFam" id="2.30.42.10:FF:000088">
    <property type="entry name" value="MAGUK p55 subfamily member 5"/>
    <property type="match status" value="1"/>
</dbReference>
<dbReference type="FunFam" id="3.40.50.300:FF:000469">
    <property type="entry name" value="MAGUK p55 subfamily member 5"/>
    <property type="match status" value="1"/>
</dbReference>
<dbReference type="Gene3D" id="2.30.42.10">
    <property type="match status" value="1"/>
</dbReference>
<dbReference type="Gene3D" id="1.10.287.650">
    <property type="entry name" value="L27 domain"/>
    <property type="match status" value="2"/>
</dbReference>
<dbReference type="Gene3D" id="3.40.50.300">
    <property type="entry name" value="P-loop containing nucleotide triphosphate hydrolases"/>
    <property type="match status" value="1"/>
</dbReference>
<dbReference type="Gene3D" id="2.30.30.40">
    <property type="entry name" value="SH3 Domains"/>
    <property type="match status" value="1"/>
</dbReference>
<dbReference type="InterPro" id="IPR008145">
    <property type="entry name" value="GK/Ca_channel_bsu"/>
</dbReference>
<dbReference type="InterPro" id="IPR008144">
    <property type="entry name" value="Guanylate_kin-like_dom"/>
</dbReference>
<dbReference type="InterPro" id="IPR020590">
    <property type="entry name" value="Guanylate_kinase_CS"/>
</dbReference>
<dbReference type="InterPro" id="IPR014775">
    <property type="entry name" value="L27_C"/>
</dbReference>
<dbReference type="InterPro" id="IPR004172">
    <property type="entry name" value="L27_dom"/>
</dbReference>
<dbReference type="InterPro" id="IPR036892">
    <property type="entry name" value="L27_dom_sf"/>
</dbReference>
<dbReference type="InterPro" id="IPR015145">
    <property type="entry name" value="L27_N"/>
</dbReference>
<dbReference type="InterPro" id="IPR050716">
    <property type="entry name" value="MAGUK"/>
</dbReference>
<dbReference type="InterPro" id="IPR035601">
    <property type="entry name" value="MPP5_SH3"/>
</dbReference>
<dbReference type="InterPro" id="IPR027417">
    <property type="entry name" value="P-loop_NTPase"/>
</dbReference>
<dbReference type="InterPro" id="IPR001478">
    <property type="entry name" value="PDZ"/>
</dbReference>
<dbReference type="InterPro" id="IPR036034">
    <property type="entry name" value="PDZ_sf"/>
</dbReference>
<dbReference type="InterPro" id="IPR036028">
    <property type="entry name" value="SH3-like_dom_sf"/>
</dbReference>
<dbReference type="InterPro" id="IPR001452">
    <property type="entry name" value="SH3_domain"/>
</dbReference>
<dbReference type="PANTHER" id="PTHR23122">
    <property type="entry name" value="MEMBRANE-ASSOCIATED GUANYLATE KINASE MAGUK"/>
    <property type="match status" value="1"/>
</dbReference>
<dbReference type="Pfam" id="PF00625">
    <property type="entry name" value="Guanylate_kin"/>
    <property type="match status" value="1"/>
</dbReference>
<dbReference type="Pfam" id="PF02828">
    <property type="entry name" value="L27"/>
    <property type="match status" value="1"/>
</dbReference>
<dbReference type="Pfam" id="PF09060">
    <property type="entry name" value="L27_N"/>
    <property type="match status" value="1"/>
</dbReference>
<dbReference type="Pfam" id="PF00595">
    <property type="entry name" value="PDZ"/>
    <property type="match status" value="1"/>
</dbReference>
<dbReference type="Pfam" id="PF07653">
    <property type="entry name" value="SH3_2"/>
    <property type="match status" value="1"/>
</dbReference>
<dbReference type="SMART" id="SM00072">
    <property type="entry name" value="GuKc"/>
    <property type="match status" value="1"/>
</dbReference>
<dbReference type="SMART" id="SM00569">
    <property type="entry name" value="L27"/>
    <property type="match status" value="2"/>
</dbReference>
<dbReference type="SMART" id="SM00228">
    <property type="entry name" value="PDZ"/>
    <property type="match status" value="1"/>
</dbReference>
<dbReference type="SMART" id="SM00326">
    <property type="entry name" value="SH3"/>
    <property type="match status" value="1"/>
</dbReference>
<dbReference type="SUPFAM" id="SSF101288">
    <property type="entry name" value="L27 domain"/>
    <property type="match status" value="2"/>
</dbReference>
<dbReference type="SUPFAM" id="SSF52540">
    <property type="entry name" value="P-loop containing nucleoside triphosphate hydrolases"/>
    <property type="match status" value="1"/>
</dbReference>
<dbReference type="SUPFAM" id="SSF50156">
    <property type="entry name" value="PDZ domain-like"/>
    <property type="match status" value="1"/>
</dbReference>
<dbReference type="SUPFAM" id="SSF50044">
    <property type="entry name" value="SH3-domain"/>
    <property type="match status" value="1"/>
</dbReference>
<dbReference type="PROSITE" id="PS00856">
    <property type="entry name" value="GUANYLATE_KINASE_1"/>
    <property type="match status" value="1"/>
</dbReference>
<dbReference type="PROSITE" id="PS50052">
    <property type="entry name" value="GUANYLATE_KINASE_2"/>
    <property type="match status" value="1"/>
</dbReference>
<dbReference type="PROSITE" id="PS51022">
    <property type="entry name" value="L27"/>
    <property type="match status" value="2"/>
</dbReference>
<dbReference type="PROSITE" id="PS50106">
    <property type="entry name" value="PDZ"/>
    <property type="match status" value="1"/>
</dbReference>
<dbReference type="PROSITE" id="PS50002">
    <property type="entry name" value="SH3"/>
    <property type="match status" value="1"/>
</dbReference>
<feature type="chain" id="PRO_0000094580" description="Protein PALS1">
    <location>
        <begin position="1"/>
        <end position="675"/>
    </location>
</feature>
<feature type="domain" description="L27 1" evidence="7">
    <location>
        <begin position="120"/>
        <end position="177"/>
    </location>
</feature>
<feature type="domain" description="L27 2" evidence="7">
    <location>
        <begin position="179"/>
        <end position="235"/>
    </location>
</feature>
<feature type="domain" description="PDZ" evidence="5">
    <location>
        <begin position="256"/>
        <end position="336"/>
    </location>
</feature>
<feature type="domain" description="SH3" evidence="6">
    <location>
        <begin position="345"/>
        <end position="417"/>
    </location>
</feature>
<feature type="domain" description="Guanylate kinase-like" evidence="4">
    <location>
        <begin position="479"/>
        <end position="660"/>
    </location>
</feature>
<feature type="region of interest" description="Required for the correct localization of PALS1 and PATJ at cell-cell contacts and the normal formation of tight junctions and adherens junctions" evidence="3">
    <location>
        <begin position="1"/>
        <end position="345"/>
    </location>
</feature>
<feature type="region of interest" description="Disordered" evidence="8">
    <location>
        <begin position="1"/>
        <end position="34"/>
    </location>
</feature>
<feature type="region of interest" description="Interaction with PARD6B" evidence="3">
    <location>
        <begin position="21"/>
        <end position="140"/>
    </location>
</feature>
<feature type="region of interest" description="Disordered" evidence="8">
    <location>
        <begin position="51"/>
        <end position="78"/>
    </location>
</feature>
<feature type="region of interest" description="Interaction with LIN7C" evidence="3">
    <location>
        <begin position="181"/>
        <end position="243"/>
    </location>
</feature>
<feature type="compositionally biased region" description="Basic and acidic residues" evidence="8">
    <location>
        <begin position="10"/>
        <end position="34"/>
    </location>
</feature>
<feature type="compositionally biased region" description="Basic and acidic residues" evidence="8">
    <location>
        <begin position="54"/>
        <end position="78"/>
    </location>
</feature>
<feature type="binding site" evidence="4">
    <location>
        <begin position="486"/>
        <end position="493"/>
    </location>
    <ligand>
        <name>ATP</name>
        <dbReference type="ChEBI" id="CHEBI:30616"/>
    </ligand>
</feature>
<feature type="modified residue" description="Phosphoserine" evidence="35">
    <location>
        <position position="14"/>
    </location>
</feature>
<feature type="modified residue" description="Phosphoserine" evidence="34 35">
    <location>
        <position position="25"/>
    </location>
</feature>
<feature type="modified residue" description="Phosphoserine" evidence="35">
    <location>
        <position position="83"/>
    </location>
</feature>
<feature type="modified residue" description="Phosphoserine" evidence="36">
    <location>
        <position position="84"/>
    </location>
</feature>
<feature type="splice variant" id="VSP_014002" description="In isoform 2." evidence="29">
    <location>
        <begin position="1"/>
        <end position="34"/>
    </location>
</feature>
<feature type="mutagenesis site" description="Increases interaction with CRB1." evidence="23">
    <original>F</original>
    <variation>A</variation>
    <variation>C</variation>
    <location>
        <position position="318"/>
    </location>
</feature>
<feature type="mutagenesis site" description="Reduces binding to Drosophila crb and causes incorrect PALS1 localization and cell polarity." evidence="22">
    <original>D</original>
    <variation>K</variation>
    <location>
        <position position="386"/>
    </location>
</feature>
<feature type="sequence conflict" description="In Ref. 1; CAD38620." evidence="32" ref="1">
    <original>D</original>
    <variation>G</variation>
    <location>
        <position position="100"/>
    </location>
</feature>
<feature type="sequence conflict" description="In Ref. 1; CAD89937." evidence="32" ref="1">
    <original>S</original>
    <variation>Y</variation>
    <location>
        <position position="141"/>
    </location>
</feature>
<feature type="sequence conflict" description="In Ref. 4; BAC05295." evidence="32" ref="4">
    <original>N</original>
    <variation>S</variation>
    <location>
        <position position="161"/>
    </location>
</feature>
<feature type="sequence conflict" description="In Ref. 4; BAC05295." evidence="32" ref="4">
    <original>M</original>
    <variation>L</variation>
    <location>
        <position position="324"/>
    </location>
</feature>
<feature type="sequence conflict" description="In Ref. 1; CAD89937." evidence="32" ref="1">
    <original>Q</original>
    <variation>H</variation>
    <location>
        <position position="401"/>
    </location>
</feature>
<feature type="sequence conflict" description="In Ref. 1; CAD89937." evidence="32" ref="1">
    <original>N</original>
    <variation>H</variation>
    <location>
        <position position="460"/>
    </location>
</feature>
<feature type="sequence conflict" description="In Ref. 4; BAB14172." evidence="32" ref="4">
    <original>C</original>
    <variation>F</variation>
    <location>
        <position position="490"/>
    </location>
</feature>
<feature type="sequence conflict" description="In Ref. 1; CAD38620." evidence="32" ref="1">
    <original>G</original>
    <variation>V</variation>
    <location>
        <position position="613"/>
    </location>
</feature>
<feature type="sequence conflict" description="In Ref. 1; CAD38620." evidence="32" ref="1">
    <original>N</original>
    <variation>S</variation>
    <location>
        <position position="634"/>
    </location>
</feature>
<feature type="helix" evidence="37">
    <location>
        <begin position="124"/>
        <end position="137"/>
    </location>
</feature>
<feature type="helix" evidence="37">
    <location>
        <begin position="141"/>
        <end position="155"/>
    </location>
</feature>
<feature type="helix" evidence="37">
    <location>
        <begin position="157"/>
        <end position="173"/>
    </location>
</feature>
<feature type="helix" evidence="37">
    <location>
        <begin position="186"/>
        <end position="197"/>
    </location>
</feature>
<feature type="turn" evidence="37">
    <location>
        <begin position="198"/>
        <end position="200"/>
    </location>
</feature>
<feature type="helix" evidence="37">
    <location>
        <begin position="203"/>
        <end position="213"/>
    </location>
</feature>
<feature type="helix" evidence="37">
    <location>
        <begin position="215"/>
        <end position="229"/>
    </location>
</feature>
<feature type="strand" evidence="37">
    <location>
        <begin position="230"/>
        <end position="232"/>
    </location>
</feature>
<feature type="strand" evidence="39">
    <location>
        <begin position="249"/>
        <end position="251"/>
    </location>
</feature>
<feature type="strand" evidence="38">
    <location>
        <begin position="255"/>
        <end position="261"/>
    </location>
</feature>
<feature type="strand" evidence="38">
    <location>
        <begin position="268"/>
        <end position="274"/>
    </location>
</feature>
<feature type="strand" evidence="38">
    <location>
        <begin position="277"/>
        <end position="283"/>
    </location>
</feature>
<feature type="helix" evidence="38">
    <location>
        <begin position="288"/>
        <end position="292"/>
    </location>
</feature>
<feature type="strand" evidence="38">
    <location>
        <begin position="300"/>
        <end position="304"/>
    </location>
</feature>
<feature type="helix" evidence="38">
    <location>
        <begin position="314"/>
        <end position="322"/>
    </location>
</feature>
<feature type="strand" evidence="38">
    <location>
        <begin position="326"/>
        <end position="333"/>
    </location>
</feature>
<feature type="strand" evidence="39">
    <location>
        <begin position="348"/>
        <end position="352"/>
    </location>
</feature>
<feature type="helix" evidence="39">
    <location>
        <begin position="358"/>
        <end position="360"/>
    </location>
</feature>
<feature type="helix" evidence="39">
    <location>
        <begin position="367"/>
        <end position="369"/>
    </location>
</feature>
<feature type="strand" evidence="39">
    <location>
        <begin position="378"/>
        <end position="383"/>
    </location>
</feature>
<feature type="strand" evidence="39">
    <location>
        <begin position="389"/>
        <end position="394"/>
    </location>
</feature>
<feature type="strand" evidence="39">
    <location>
        <begin position="405"/>
        <end position="408"/>
    </location>
</feature>
<feature type="strand" evidence="39">
    <location>
        <begin position="464"/>
        <end position="472"/>
    </location>
</feature>
<feature type="strand" evidence="39">
    <location>
        <begin position="482"/>
        <end position="486"/>
    </location>
</feature>
<feature type="turn" evidence="39">
    <location>
        <begin position="488"/>
        <end position="491"/>
    </location>
</feature>
<feature type="helix" evidence="39">
    <location>
        <begin position="492"/>
        <end position="502"/>
    </location>
</feature>
<feature type="turn" evidence="39">
    <location>
        <begin position="503"/>
        <end position="506"/>
    </location>
</feature>
<feature type="turn" evidence="39">
    <location>
        <begin position="524"/>
        <end position="527"/>
    </location>
</feature>
<feature type="helix" evidence="39">
    <location>
        <begin position="533"/>
        <end position="541"/>
    </location>
</feature>
<feature type="strand" evidence="39">
    <location>
        <begin position="545"/>
        <end position="551"/>
    </location>
</feature>
<feature type="strand" evidence="39">
    <location>
        <begin position="554"/>
        <end position="559"/>
    </location>
</feature>
<feature type="helix" evidence="39">
    <location>
        <begin position="560"/>
        <end position="567"/>
    </location>
</feature>
<feature type="turn" evidence="39">
    <location>
        <begin position="568"/>
        <end position="570"/>
    </location>
</feature>
<feature type="strand" evidence="39">
    <location>
        <begin position="571"/>
        <end position="576"/>
    </location>
</feature>
<feature type="helix" evidence="39">
    <location>
        <begin position="579"/>
        <end position="581"/>
    </location>
</feature>
<feature type="helix" evidence="39">
    <location>
        <begin position="582"/>
        <end position="586"/>
    </location>
</feature>
<feature type="strand" evidence="39">
    <location>
        <begin position="593"/>
        <end position="598"/>
    </location>
</feature>
<feature type="helix" evidence="39">
    <location>
        <begin position="602"/>
        <end position="608"/>
    </location>
</feature>
<feature type="helix" evidence="39">
    <location>
        <begin position="621"/>
        <end position="631"/>
    </location>
</feature>
<feature type="helix" evidence="39">
    <location>
        <begin position="634"/>
        <end position="636"/>
    </location>
</feature>
<feature type="strand" evidence="39">
    <location>
        <begin position="639"/>
        <end position="644"/>
    </location>
</feature>
<feature type="helix" evidence="39">
    <location>
        <begin position="648"/>
        <end position="660"/>
    </location>
</feature>
<feature type="turn" evidence="39">
    <location>
        <begin position="661"/>
        <end position="664"/>
    </location>
</feature>
<feature type="strand" evidence="39">
    <location>
        <begin position="667"/>
        <end position="670"/>
    </location>
</feature>
<feature type="helix" evidence="39">
    <location>
        <begin position="671"/>
        <end position="673"/>
    </location>
</feature>
<organism>
    <name type="scientific">Homo sapiens</name>
    <name type="common">Human</name>
    <dbReference type="NCBI Taxonomy" id="9606"/>
    <lineage>
        <taxon>Eukaryota</taxon>
        <taxon>Metazoa</taxon>
        <taxon>Chordata</taxon>
        <taxon>Craniata</taxon>
        <taxon>Vertebrata</taxon>
        <taxon>Euteleostomi</taxon>
        <taxon>Mammalia</taxon>
        <taxon>Eutheria</taxon>
        <taxon>Euarchontoglires</taxon>
        <taxon>Primates</taxon>
        <taxon>Haplorrhini</taxon>
        <taxon>Catarrhini</taxon>
        <taxon>Hominidae</taxon>
        <taxon>Homo</taxon>
    </lineage>
</organism>
<gene>
    <name evidence="30 33" type="primary">PALS1</name>
    <name evidence="27" type="synonym">MPP5</name>
</gene>
<comment type="function">
    <text evidence="1 3 13 20 22 24">Plays a role in tight junction biogenesis and in the establishment of cell polarity in epithelial cells (PubMed:16678097, PubMed:25385611). Also involved in adherens junction biogenesis by ensuring correct localization of the exocyst complex protein EXOC4/SEC8 which allows trafficking of adherens junction structural component CDH1 to the cell surface (By similarity). Plays a role through its interaction with CDH5 in vascular lumen formation and endothelial membrane polarity (PubMed:27466317). Required during embryonic and postnatal retinal development (By similarity). Required for the maintenance of cerebellar progenitor cells in an undifferentiated proliferative state, preventing premature differentiation, and is required for cerebellar histogenesis, fissure formation, cerebellar layer organization and cortical development (By similarity). Plays a role in neuronal progenitor cell survival, potentially via promotion of mTOR signaling (By similarity). Plays a role in the radial and longitudinal extension of the myelin sheath in Schwann cells (By similarity). May modulate SC6A1/GAT1-mediated GABA uptake by stabilizing the transporter (By similarity). Plays a role in the T-cell receptor-mediated activation of NF-kappa-B (PubMed:21479189). Required for localization of EZR to the apical membrane of parietal cells and may play a role in the dynamic remodeling of the apical cytoskeleton (By similarity). Required for the normal polarized localization of the vesicular marker STX4 (By similarity). Required for the correct trafficking of the myelin proteins PMP22 and MAG (By similarity). Involved in promoting phosphorylation and cytoplasmic retention of transcriptional coactivators YAP1 and WWTR1/TAZ which leads to suppression of TGFB1-dependent transcription of target genes such as CCN2/CTGF, SERPINE1/PAI1, SNAI1/SNAIL1 and SMAD7 (By similarity).</text>
</comment>
<comment type="function">
    <text evidence="18 31">(Microbial infection) Acts as an interaction partner for human coronaviruses SARS-CoV and, probably, SARS-CoV-2 envelope protein E which results in delayed formation of tight junctions and disregulation of cell polarity.</text>
</comment>
<comment type="subunit">
    <text evidence="2 3 9 11 12 13 14 15 16 17 19 21 22 23 24 25">Heterodimer with MPP1 (PubMed:17584769). Forms a heterotrimeric complex composed of PALS1, LIN7B and PATJ; the N-terminal L27 domain of PALS1 interacts with the L27 domain of PATJ and the C-terminal L27 domain of PALS1 interacts with the L27 domain of LIN7B (PubMed:22337881). Component of a complex composed of PALS1, CRB1 and MPP4 (PubMed:15914641). Component of a complex whose core is composed of ARHGAP17, AMOT, PALS1, PATJ and PARD3/PAR3 (PubMed:16678097). Component of a complex composed of PALS1, CRB1 and EPB41L5 (PubMed:17920587). Within the complex, interacts (via HOOK domain) with EPB41L5 (via FERM domain), and interacts with CRB1 (via intracellular domain) (PubMed:17920587). Component of a complex composed of PALS1, MPP3 and CRB1; PALS1 acts as a bridging protein between MPP3 (via guanylate kinase-like domain) and CRB1 (PubMed:16519681). Component of a complex composed of CRB3, PALS1 and PATJ (By similarity). As part of the Crumbs complex; interacts with WWP1, the interaction is enhanced by AMOTL2 and facilitates WWP1 localization to the plasma membrane (PubMed:34404733). The Crumbs complex promotes monoubiquitination of AMOTL2 by WWP1, which activates the Hippo signaling pathway (PubMed:34404733). Interacts (via PDZ domain) with PATJ (via N-terminus) (PubMed:12527193). Interacts with EZR (By similarity). Interacts (via PDZ domain) with CRB1 (via C-terminal ERLI motif) (PubMed:25385611, PubMed:25760605). While the PDZ domain is sufficient for interaction with CRB1, the adjacent SH3 and guanylate kinase-like domains are likely to contribute to a high affinity interaction (PubMed:25385611). Interacts with WWTR1/TAZ (via WW domain) (PubMed:21145499). Interacts with MPP7 (PubMed:16678097, PubMed:17332497). Interacts (via PDZ domain) with CRB3 (via C-terminus) (By similarity). Interacts with LIN7C (By similarity). Interacts with MPDZ (By similarity). Interacts with PARD6B (By similarity). Interacts with SC6A1 (By similarity). Interacts with CDH5; the interaction promotes PALS1 localization to cell junctions and is required for CDH5-mediated vascular lumen formation and endothelial cell (PubMed:27466317). Interacts with NPHP1 (via coiled coil and SH3 domains) (PubMed:19755384). Interacts with NPHP4 (PubMed:19755384). Interacts with CRB2 (By similarity).</text>
</comment>
<comment type="subunit">
    <text evidence="18 31">(Microbial infection) Interacts (via PDZ domain) with human coronaviruses SARS-CoV and, probably, SARS-CoV-2 envelope small membrane protein E (via C-terminus); this inhibits the interaction between PALS1 and CRB3.</text>
</comment>
<comment type="interaction">
    <interactant intactId="EBI-2513978">
        <id>Q8N3R9</id>
    </interactant>
    <interactant intactId="EBI-946046">
        <id>P54252</id>
        <label>ATXN3</label>
    </interactant>
    <organismsDiffer>false</organismsDiffer>
    <experiments>3</experiments>
</comment>
<comment type="interaction">
    <interactant intactId="EBI-2513978">
        <id>Q8N3R9</id>
    </interactant>
    <interactant intactId="EBI-1048648">
        <id>P82279</id>
        <label>CRB1</label>
    </interactant>
    <organismsDiffer>false</organismsDiffer>
    <experiments>5</experiments>
</comment>
<comment type="interaction">
    <interactant intactId="EBI-2513978">
        <id>Q8N3R9</id>
    </interactant>
    <interactant intactId="EBI-12000556">
        <id>Q9Y2H0-1</id>
        <label>DLGAP4</label>
    </interactant>
    <organismsDiffer>false</organismsDiffer>
    <experiments>3</experiments>
</comment>
<comment type="interaction">
    <interactant intactId="EBI-2513978">
        <id>Q8N3R9</id>
    </interactant>
    <interactant intactId="EBI-1047162">
        <id>Q9HCM4</id>
        <label>EPB41L5</label>
    </interactant>
    <organismsDiffer>false</organismsDiffer>
    <experiments>4</experiments>
</comment>
<comment type="interaction">
    <interactant intactId="EBI-2513978">
        <id>Q8N3R9</id>
    </interactant>
    <interactant intactId="EBI-348399">
        <id>P22607</id>
        <label>FGFR3</label>
    </interactant>
    <organismsDiffer>false</organismsDiffer>
    <experiments>3</experiments>
</comment>
<comment type="interaction">
    <interactant intactId="EBI-2513978">
        <id>Q8N3R9</id>
    </interactant>
    <interactant intactId="EBI-10192648">
        <id>O95954</id>
        <label>FTCD</label>
    </interactant>
    <organismsDiffer>false</organismsDiffer>
    <experiments>3</experiments>
</comment>
<comment type="interaction">
    <interactant intactId="EBI-2513978">
        <id>Q8N3R9</id>
    </interactant>
    <interactant intactId="EBI-11519926">
        <id>Q6PI77</id>
        <label>GPRASP3</label>
    </interactant>
    <organismsDiffer>false</organismsDiffer>
    <experiments>3</experiments>
</comment>
<comment type="interaction">
    <interactant intactId="EBI-2513978">
        <id>Q8N3R9</id>
    </interactant>
    <interactant intactId="EBI-351506">
        <id>P06396</id>
        <label>GSN</label>
    </interactant>
    <organismsDiffer>false</organismsDiffer>
    <experiments>3</experiments>
</comment>
<comment type="interaction">
    <interactant intactId="EBI-2513978">
        <id>Q8N3R9</id>
    </interactant>
    <interactant intactId="EBI-466029">
        <id>P42858</id>
        <label>HTT</label>
    </interactant>
    <organismsDiffer>false</organismsDiffer>
    <experiments>3</experiments>
</comment>
<comment type="interaction">
    <interactant intactId="EBI-2513978">
        <id>Q8N3R9</id>
    </interactant>
    <interactant intactId="EBI-2513988">
        <id>O14910</id>
        <label>LIN7A</label>
    </interactant>
    <organismsDiffer>false</organismsDiffer>
    <experiments>10</experiments>
</comment>
<comment type="interaction">
    <interactant intactId="EBI-2513978">
        <id>Q8N3R9</id>
    </interactant>
    <interactant intactId="EBI-821335">
        <id>Q9HAP6</id>
        <label>LIN7B</label>
    </interactant>
    <organismsDiffer>false</organismsDiffer>
    <experiments>5</experiments>
</comment>
<comment type="interaction">
    <interactant intactId="EBI-2513978">
        <id>Q8N3R9</id>
    </interactant>
    <interactant intactId="EBI-1171517">
        <id>Q9NUP9</id>
        <label>LIN7C</label>
    </interactant>
    <organismsDiffer>false</organismsDiffer>
    <experiments>6</experiments>
</comment>
<comment type="interaction">
    <interactant intactId="EBI-2513978">
        <id>Q8N3R9</id>
    </interactant>
    <interactant intactId="EBI-2483346">
        <id>Q96JB8</id>
        <label>MPP4</label>
    </interactant>
    <organismsDiffer>false</organismsDiffer>
    <experiments>5</experiments>
</comment>
<comment type="interaction">
    <interactant intactId="EBI-2513978">
        <id>Q8N3R9</id>
    </interactant>
    <interactant intactId="EBI-2513978">
        <id>Q8N3R9</id>
        <label>PALS1</label>
    </interactant>
    <organismsDiffer>false</organismsDiffer>
    <experiments>2</experiments>
</comment>
<comment type="interaction">
    <interactant intactId="EBI-2513978">
        <id>Q8N3R9</id>
    </interactant>
    <interactant intactId="EBI-724390">
        <id>Q8NI35</id>
        <label>PATJ</label>
    </interactant>
    <organismsDiffer>false</organismsDiffer>
    <experiments>6</experiments>
</comment>
<comment type="interaction">
    <interactant intactId="EBI-2513978">
        <id>Q8N3R9</id>
    </interactant>
    <interactant intactId="EBI-18173613">
        <id>Q9NY99-2</id>
        <label>SNTG2</label>
    </interactant>
    <organismsDiffer>false</organismsDiffer>
    <experiments>3</experiments>
</comment>
<comment type="interaction">
    <interactant intactId="EBI-2513978">
        <id>Q8N3R9</id>
    </interactant>
    <interactant intactId="EBI-17766455">
        <id>A0A286YEY3</id>
        <label>SRGAP2B</label>
    </interactant>
    <organismsDiffer>false</organismsDiffer>
    <experiments>3</experiments>
</comment>
<comment type="interaction">
    <interactant intactId="EBI-2513978">
        <id>Q8N3R9</id>
    </interactant>
    <interactant intactId="EBI-355744">
        <id>Q12933</id>
        <label>TRAF2</label>
    </interactant>
    <organismsDiffer>false</organismsDiffer>
    <experiments>3</experiments>
</comment>
<comment type="interaction">
    <interactant intactId="EBI-2513978">
        <id>Q8N3R9</id>
    </interactant>
    <interactant intactId="EBI-711909">
        <id>P02766</id>
        <label>TTR</label>
    </interactant>
    <organismsDiffer>false</organismsDiffer>
    <experiments>3</experiments>
</comment>
<comment type="interaction">
    <interactant intactId="EBI-2513978">
        <id>Q8N3R9</id>
    </interactant>
    <interactant intactId="EBI-741480">
        <id>Q9UMX0</id>
        <label>UBQLN1</label>
    </interactant>
    <organismsDiffer>false</organismsDiffer>
    <experiments>3</experiments>
</comment>
<comment type="interaction">
    <interactant intactId="EBI-2513978">
        <id>Q8N3R9</id>
    </interactant>
    <interactant intactId="EBI-720609">
        <id>O76024</id>
        <label>WFS1</label>
    </interactant>
    <organismsDiffer>false</organismsDiffer>
    <experiments>3</experiments>
</comment>
<comment type="interaction">
    <interactant intactId="EBI-2513978">
        <id>Q8N3R9</id>
    </interactant>
    <interactant intactId="EBI-25475850">
        <id>P0DTC4</id>
        <label>E</label>
    </interactant>
    <organismsDiffer>true</organismsDiffer>
    <experiments>6</experiments>
</comment>
<comment type="interaction">
    <interactant intactId="EBI-2513978">
        <id>Q8N3R9</id>
    </interactant>
    <interactant intactId="EBI-25487741">
        <id>P59637</id>
        <label>E</label>
    </interactant>
    <organismsDiffer>true</organismsDiffer>
    <experiments>4</experiments>
</comment>
<comment type="interaction">
    <interactant intactId="EBI-8231026">
        <id>Q8N3R9-1</id>
    </interactant>
    <interactant intactId="EBI-25611611">
        <id>PRO_0000021005</id>
        <label>CRB3</label>
        <dbReference type="UniProtKB" id="Q9BUF7"/>
    </interactant>
    <organismsDiffer>false</organismsDiffer>
    <experiments>3</experiments>
</comment>
<comment type="interaction">
    <interactant intactId="EBI-8231026">
        <id>Q8N3R9-1</id>
    </interactant>
    <interactant intactId="EBI-25487741">
        <id>P59637</id>
        <label>E</label>
    </interactant>
    <organismsDiffer>true</organismsDiffer>
    <experiments>9</experiments>
</comment>
<comment type="subcellular location">
    <subcellularLocation>
        <location evidence="20">Golgi apparatus</location>
    </subcellularLocation>
    <subcellularLocation>
        <location>Cell membrane</location>
        <topology>Peripheral membrane protein</topology>
    </subcellularLocation>
    <subcellularLocation>
        <location>Endomembrane system</location>
        <topology>Peripheral membrane protein</topology>
    </subcellularLocation>
    <subcellularLocation>
        <location evidence="18 25">Cell junction</location>
        <location evidence="18 25">Tight junction</location>
    </subcellularLocation>
    <subcellularLocation>
        <location evidence="12 25">Cell junction</location>
        <location evidence="12 25">Adherens junction</location>
    </subcellularLocation>
    <subcellularLocation>
        <location evidence="3">Cell projection</location>
        <location evidence="3">Axon</location>
    </subcellularLocation>
    <subcellularLocation>
        <location evidence="3">Perikaryon</location>
    </subcellularLocation>
    <subcellularLocation>
        <location evidence="11 12 22">Apical cell membrane</location>
    </subcellularLocation>
    <text evidence="3 11 12 15 20 24">Localized to the tight junctions of epithelial cells (By similarity). Localized to the Golgi apparatus in T lymphocytes (PubMed:21479189). Localized to a subset of intracellular vesicles (By similarity). Localized to the Purkinje cell body and axon (By similarity). Localized to intercellular junctions in vascular endothelial cells (PubMed:27466317). Localized to Schmidt-Lanterman incisures, the adaxonal domain, and the inner part of paranodal loops in myelinating Schwann cells of the sciatic nerve (By similarity). Localized to apical membrane domains of the outer limiting membrane (OLM) junctions in the retina (By similarity). Colocalizes with CRB1 at the OLM, apical to the adherens junction (PubMed:15914641). Colocalizes with MPP1 in the retina at the OLM (PubMed:17584769). Colocalizes with MPP3 to the subapical region of adherens junctions in the retina OLM (PubMed:16519681).</text>
</comment>
<comment type="subcellular location">
    <subcellularLocation>
        <location evidence="18">Endoplasmic reticulum-Golgi intermediate compartment</location>
    </subcellularLocation>
    <subcellularLocation>
        <location evidence="18">Golgi apparatus</location>
    </subcellularLocation>
    <text evidence="18">(Microbial infection) Following infection by human SARS coronavirus, partially localized at the site of viral replication; the endoplasmic reticulum-Golgi intermediate compartment, reducing its levels at cell-cell contacts which results in delayed formation of tight junctions and affects establishment of cell polarity.</text>
</comment>
<comment type="alternative products">
    <event type="alternative splicing"/>
    <isoform>
        <id>Q8N3R9-1</id>
        <name>1</name>
        <sequence type="displayed"/>
    </isoform>
    <isoform>
        <id>Q8N3R9-2</id>
        <name>2</name>
        <sequence type="described" ref="VSP_014002"/>
    </isoform>
</comment>
<comment type="tissue specificity">
    <text evidence="10 11 12 15 20">Expressed at the outer limiting membrane in the retina (at protein level) (PubMed:15558731, PubMed:15914641, PubMed:16519681, PubMed:17584769). Expressed in T lymphocytes (at protein level) (PubMed:21479189). Expressed in the kidney (at protein level) (PubMed:17584769).</text>
</comment>
<comment type="domain">
    <text evidence="3">The L27 domain 1 functions in targeting to the tight junctions by binding to and stabilizing PATJ.</text>
</comment>
<comment type="domain">
    <text evidence="3">The PDZ domain binds to the C-terminus of SC6A1.</text>
</comment>
<comment type="similarity">
    <text evidence="32">Belongs to the MAGUK family.</text>
</comment>
<comment type="sequence caution" evidence="32">
    <conflict type="miscellaneous discrepancy">
        <sequence resource="EMBL-CDS" id="AAH53366"/>
    </conflict>
    <text>Contaminating sequence. Potential poly-A sequence.</text>
</comment>
<comment type="sequence caution" evidence="32">
    <conflict type="erroneous initiation">
        <sequence resource="EMBL-CDS" id="BAB14172"/>
    </conflict>
    <text>Truncated N-terminus.</text>
</comment>
<keyword id="KW-0002">3D-structure</keyword>
<keyword id="KW-0025">Alternative splicing</keyword>
<keyword id="KW-0067">ATP-binding</keyword>
<keyword id="KW-0965">Cell junction</keyword>
<keyword id="KW-1003">Cell membrane</keyword>
<keyword id="KW-0966">Cell projection</keyword>
<keyword id="KW-0333">Golgi apparatus</keyword>
<keyword id="KW-0945">Host-virus interaction</keyword>
<keyword id="KW-0472">Membrane</keyword>
<keyword id="KW-0547">Nucleotide-binding</keyword>
<keyword id="KW-0597">Phosphoprotein</keyword>
<keyword id="KW-1267">Proteomics identification</keyword>
<keyword id="KW-1185">Reference proteome</keyword>
<keyword id="KW-0677">Repeat</keyword>
<keyword id="KW-0728">SH3 domain</keyword>
<keyword id="KW-0796">Tight junction</keyword>
<evidence type="ECO:0000250" key="1">
    <source>
        <dbReference type="UniProtKB" id="B4F7E7"/>
    </source>
</evidence>
<evidence type="ECO:0000250" key="2">
    <source>
        <dbReference type="UniProtKB" id="E2QY99"/>
    </source>
</evidence>
<evidence type="ECO:0000250" key="3">
    <source>
        <dbReference type="UniProtKB" id="Q9JLB2"/>
    </source>
</evidence>
<evidence type="ECO:0000255" key="4">
    <source>
        <dbReference type="PROSITE-ProRule" id="PRU00100"/>
    </source>
</evidence>
<evidence type="ECO:0000255" key="5">
    <source>
        <dbReference type="PROSITE-ProRule" id="PRU00143"/>
    </source>
</evidence>
<evidence type="ECO:0000255" key="6">
    <source>
        <dbReference type="PROSITE-ProRule" id="PRU00192"/>
    </source>
</evidence>
<evidence type="ECO:0000255" key="7">
    <source>
        <dbReference type="PROSITE-ProRule" id="PRU00365"/>
    </source>
</evidence>
<evidence type="ECO:0000256" key="8">
    <source>
        <dbReference type="SAM" id="MobiDB-lite"/>
    </source>
</evidence>
<evidence type="ECO:0000269" key="9">
    <source>
    </source>
</evidence>
<evidence type="ECO:0000269" key="10">
    <source>
    </source>
</evidence>
<evidence type="ECO:0000269" key="11">
    <source>
    </source>
</evidence>
<evidence type="ECO:0000269" key="12">
    <source>
    </source>
</evidence>
<evidence type="ECO:0000269" key="13">
    <source>
    </source>
</evidence>
<evidence type="ECO:0000269" key="14">
    <source>
    </source>
</evidence>
<evidence type="ECO:0000269" key="15">
    <source>
    </source>
</evidence>
<evidence type="ECO:0000269" key="16">
    <source>
    </source>
</evidence>
<evidence type="ECO:0000269" key="17">
    <source>
    </source>
</evidence>
<evidence type="ECO:0000269" key="18">
    <source>
    </source>
</evidence>
<evidence type="ECO:0000269" key="19">
    <source>
    </source>
</evidence>
<evidence type="ECO:0000269" key="20">
    <source>
    </source>
</evidence>
<evidence type="ECO:0000269" key="21">
    <source>
    </source>
</evidence>
<evidence type="ECO:0000269" key="22">
    <source>
    </source>
</evidence>
<evidence type="ECO:0000269" key="23">
    <source>
    </source>
</evidence>
<evidence type="ECO:0000269" key="24">
    <source>
    </source>
</evidence>
<evidence type="ECO:0000269" key="25">
    <source>
    </source>
</evidence>
<evidence type="ECO:0000303" key="26">
    <source>
    </source>
</evidence>
<evidence type="ECO:0000303" key="27">
    <source>
    </source>
</evidence>
<evidence type="ECO:0000303" key="28">
    <source>
    </source>
</evidence>
<evidence type="ECO:0000303" key="29">
    <source>
    </source>
</evidence>
<evidence type="ECO:0000303" key="30">
    <source>
    </source>
</evidence>
<evidence type="ECO:0000303" key="31">
    <source>
    </source>
</evidence>
<evidence type="ECO:0000305" key="32"/>
<evidence type="ECO:0000312" key="33">
    <source>
        <dbReference type="HGNC" id="HGNC:18669"/>
    </source>
</evidence>
<evidence type="ECO:0007744" key="34">
    <source>
    </source>
</evidence>
<evidence type="ECO:0007744" key="35">
    <source>
    </source>
</evidence>
<evidence type="ECO:0007744" key="36">
    <source>
    </source>
</evidence>
<evidence type="ECO:0007829" key="37">
    <source>
        <dbReference type="PDB" id="3UIT"/>
    </source>
</evidence>
<evidence type="ECO:0007829" key="38">
    <source>
        <dbReference type="PDB" id="4UU5"/>
    </source>
</evidence>
<evidence type="ECO:0007829" key="39">
    <source>
        <dbReference type="PDB" id="4WSI"/>
    </source>
</evidence>